<keyword id="KW-0067">ATP-binding</keyword>
<keyword id="KW-0436">Ligase</keyword>
<keyword id="KW-0547">Nucleotide-binding</keyword>
<keyword id="KW-0658">Purine biosynthesis</keyword>
<keyword id="KW-1185">Reference proteome</keyword>
<feature type="chain" id="PRO_1000018739" description="Phosphoribosylaminoimidazole-succinocarboxamide synthase">
    <location>
        <begin position="1"/>
        <end position="297"/>
    </location>
</feature>
<dbReference type="EC" id="6.3.2.6" evidence="1"/>
<dbReference type="EMBL" id="CP000611">
    <property type="protein sequence ID" value="ABQ72518.1"/>
    <property type="molecule type" value="Genomic_DNA"/>
</dbReference>
<dbReference type="RefSeq" id="WP_003403962.1">
    <property type="nucleotide sequence ID" value="NZ_CP016972.1"/>
</dbReference>
<dbReference type="SMR" id="A5U0G8"/>
<dbReference type="KEGG" id="mra:MRA_0789"/>
<dbReference type="eggNOG" id="COG0152">
    <property type="taxonomic scope" value="Bacteria"/>
</dbReference>
<dbReference type="HOGENOM" id="CLU_045637_0_0_11"/>
<dbReference type="UniPathway" id="UPA00074">
    <property type="reaction ID" value="UER00131"/>
</dbReference>
<dbReference type="Proteomes" id="UP000001988">
    <property type="component" value="Chromosome"/>
</dbReference>
<dbReference type="GO" id="GO:0005737">
    <property type="term" value="C:cytoplasm"/>
    <property type="evidence" value="ECO:0007669"/>
    <property type="project" value="TreeGrafter"/>
</dbReference>
<dbReference type="GO" id="GO:0005524">
    <property type="term" value="F:ATP binding"/>
    <property type="evidence" value="ECO:0007669"/>
    <property type="project" value="UniProtKB-KW"/>
</dbReference>
<dbReference type="GO" id="GO:0004639">
    <property type="term" value="F:phosphoribosylaminoimidazolesuccinocarboxamide synthase activity"/>
    <property type="evidence" value="ECO:0007669"/>
    <property type="project" value="UniProtKB-UniRule"/>
</dbReference>
<dbReference type="GO" id="GO:0006189">
    <property type="term" value="P:'de novo' IMP biosynthetic process"/>
    <property type="evidence" value="ECO:0007669"/>
    <property type="project" value="UniProtKB-UniRule"/>
</dbReference>
<dbReference type="CDD" id="cd01414">
    <property type="entry name" value="SAICAR_synt_Sc"/>
    <property type="match status" value="1"/>
</dbReference>
<dbReference type="FunFam" id="3.30.200.20:FF:000199">
    <property type="entry name" value="Phosphoribosylaminoimidazole-succinocarboxamide synthase"/>
    <property type="match status" value="1"/>
</dbReference>
<dbReference type="FunFam" id="3.30.470.20:FF:000015">
    <property type="entry name" value="Phosphoribosylaminoimidazole-succinocarboxamide synthase"/>
    <property type="match status" value="1"/>
</dbReference>
<dbReference type="Gene3D" id="3.30.470.20">
    <property type="entry name" value="ATP-grasp fold, B domain"/>
    <property type="match status" value="1"/>
</dbReference>
<dbReference type="Gene3D" id="3.30.200.20">
    <property type="entry name" value="Phosphorylase Kinase, domain 1"/>
    <property type="match status" value="1"/>
</dbReference>
<dbReference type="HAMAP" id="MF_00137">
    <property type="entry name" value="SAICAR_synth"/>
    <property type="match status" value="1"/>
</dbReference>
<dbReference type="InterPro" id="IPR028923">
    <property type="entry name" value="SAICAR_synt/ADE2_N"/>
</dbReference>
<dbReference type="InterPro" id="IPR001636">
    <property type="entry name" value="SAICAR_synth"/>
</dbReference>
<dbReference type="InterPro" id="IPR018236">
    <property type="entry name" value="SAICAR_synthetase_CS"/>
</dbReference>
<dbReference type="NCBIfam" id="NF010568">
    <property type="entry name" value="PRK13961.1"/>
    <property type="match status" value="1"/>
</dbReference>
<dbReference type="NCBIfam" id="TIGR00081">
    <property type="entry name" value="purC"/>
    <property type="match status" value="1"/>
</dbReference>
<dbReference type="PANTHER" id="PTHR43700">
    <property type="entry name" value="PHOSPHORIBOSYLAMINOIMIDAZOLE-SUCCINOCARBOXAMIDE SYNTHASE"/>
    <property type="match status" value="1"/>
</dbReference>
<dbReference type="PANTHER" id="PTHR43700:SF1">
    <property type="entry name" value="PHOSPHORIBOSYLAMINOIMIDAZOLE-SUCCINOCARBOXAMIDE SYNTHASE"/>
    <property type="match status" value="1"/>
</dbReference>
<dbReference type="Pfam" id="PF01259">
    <property type="entry name" value="SAICAR_synt"/>
    <property type="match status" value="1"/>
</dbReference>
<dbReference type="SUPFAM" id="SSF56104">
    <property type="entry name" value="SAICAR synthase-like"/>
    <property type="match status" value="1"/>
</dbReference>
<dbReference type="PROSITE" id="PS01057">
    <property type="entry name" value="SAICAR_SYNTHETASE_1"/>
    <property type="match status" value="1"/>
</dbReference>
<dbReference type="PROSITE" id="PS01058">
    <property type="entry name" value="SAICAR_SYNTHETASE_2"/>
    <property type="match status" value="1"/>
</dbReference>
<evidence type="ECO:0000255" key="1">
    <source>
        <dbReference type="HAMAP-Rule" id="MF_00137"/>
    </source>
</evidence>
<protein>
    <recommendedName>
        <fullName evidence="1">Phosphoribosylaminoimidazole-succinocarboxamide synthase</fullName>
        <ecNumber evidence="1">6.3.2.6</ecNumber>
    </recommendedName>
    <alternativeName>
        <fullName evidence="1">SAICAR synthetase</fullName>
    </alternativeName>
</protein>
<comment type="catalytic activity">
    <reaction evidence="1">
        <text>5-amino-1-(5-phospho-D-ribosyl)imidazole-4-carboxylate + L-aspartate + ATP = (2S)-2-[5-amino-1-(5-phospho-beta-D-ribosyl)imidazole-4-carboxamido]succinate + ADP + phosphate + 2 H(+)</text>
        <dbReference type="Rhea" id="RHEA:22628"/>
        <dbReference type="ChEBI" id="CHEBI:15378"/>
        <dbReference type="ChEBI" id="CHEBI:29991"/>
        <dbReference type="ChEBI" id="CHEBI:30616"/>
        <dbReference type="ChEBI" id="CHEBI:43474"/>
        <dbReference type="ChEBI" id="CHEBI:58443"/>
        <dbReference type="ChEBI" id="CHEBI:77657"/>
        <dbReference type="ChEBI" id="CHEBI:456216"/>
        <dbReference type="EC" id="6.3.2.6"/>
    </reaction>
</comment>
<comment type="pathway">
    <text evidence="1">Purine metabolism; IMP biosynthesis via de novo pathway; 5-amino-1-(5-phospho-D-ribosyl)imidazole-4-carboxamide from 5-amino-1-(5-phospho-D-ribosyl)imidazole-4-carboxylate: step 1/2.</text>
</comment>
<comment type="similarity">
    <text evidence="1">Belongs to the SAICAR synthetase family.</text>
</comment>
<reference key="1">
    <citation type="journal article" date="2008" name="PLoS ONE">
        <title>Genetic basis of virulence attenuation revealed by comparative genomic analysis of Mycobacterium tuberculosis strain H37Ra versus H37Rv.</title>
        <authorList>
            <person name="Zheng H."/>
            <person name="Lu L."/>
            <person name="Wang B."/>
            <person name="Pu S."/>
            <person name="Zhang X."/>
            <person name="Zhu G."/>
            <person name="Shi W."/>
            <person name="Zhang L."/>
            <person name="Wang H."/>
            <person name="Wang S."/>
            <person name="Zhao G."/>
            <person name="Zhang Y."/>
        </authorList>
    </citation>
    <scope>NUCLEOTIDE SEQUENCE [LARGE SCALE GENOMIC DNA]</scope>
    <source>
        <strain>ATCC 25177 / H37Ra</strain>
    </source>
</reference>
<sequence length="297" mass="32930">MRPALSDYQHVASGKVREIYRVDDEHLLLVASDRISAYDYVLDSTIPDKGRVLTAMSAFFFGLVDAPNHLAGPPDDPRIPDEVLGRALVVRRLEMLPVECVARGYLTGSGLLDYQATGKVCGIALPPGLVEASRFATPLFTPATKAALGDHDENISFDRVVEMVGALRANQLRDRTLQTYVQAADHALTRGIIIADTKFEFGIDRHGNLLLADEIFTPDSSRYWPADDYRAGVVQTSFDKQFVRSWLTGSESGWDRGSDRPPPPLPEHIVEATRARYINAYERISELKFDDWIGPGA</sequence>
<organism>
    <name type="scientific">Mycobacterium tuberculosis (strain ATCC 25177 / H37Ra)</name>
    <dbReference type="NCBI Taxonomy" id="419947"/>
    <lineage>
        <taxon>Bacteria</taxon>
        <taxon>Bacillati</taxon>
        <taxon>Actinomycetota</taxon>
        <taxon>Actinomycetes</taxon>
        <taxon>Mycobacteriales</taxon>
        <taxon>Mycobacteriaceae</taxon>
        <taxon>Mycobacterium</taxon>
        <taxon>Mycobacterium tuberculosis complex</taxon>
    </lineage>
</organism>
<proteinExistence type="inferred from homology"/>
<name>PUR7_MYCTA</name>
<accession>A5U0G8</accession>
<gene>
    <name evidence="1" type="primary">purC</name>
    <name type="ordered locus">MRA_0789</name>
</gene>